<reference key="1">
    <citation type="submission" date="2006-12" db="EMBL/GenBank/DDBJ databases">
        <title>Bifidobacterium adolescentis complete genome sequence.</title>
        <authorList>
            <person name="Suzuki T."/>
            <person name="Tsuda Y."/>
            <person name="Kanou N."/>
            <person name="Inoue T."/>
            <person name="Kumazaki K."/>
            <person name="Nagano S."/>
            <person name="Hirai S."/>
            <person name="Tanaka K."/>
            <person name="Watanabe K."/>
        </authorList>
    </citation>
    <scope>NUCLEOTIDE SEQUENCE [LARGE SCALE GENOMIC DNA]</scope>
    <source>
        <strain>ATCC 15703 / DSM 20083 / NCTC 11814 / E194a</strain>
    </source>
</reference>
<proteinExistence type="inferred from homology"/>
<organism>
    <name type="scientific">Bifidobacterium adolescentis (strain ATCC 15703 / DSM 20083 / NCTC 11814 / E194a)</name>
    <dbReference type="NCBI Taxonomy" id="367928"/>
    <lineage>
        <taxon>Bacteria</taxon>
        <taxon>Bacillati</taxon>
        <taxon>Actinomycetota</taxon>
        <taxon>Actinomycetes</taxon>
        <taxon>Bifidobacteriales</taxon>
        <taxon>Bifidobacteriaceae</taxon>
        <taxon>Bifidobacterium</taxon>
    </lineage>
</organism>
<keyword id="KW-0963">Cytoplasm</keyword>
<keyword id="KW-0328">Glycosyltransferase</keyword>
<keyword id="KW-0660">Purine salvage</keyword>
<keyword id="KW-1185">Reference proteome</keyword>
<keyword id="KW-0808">Transferase</keyword>
<evidence type="ECO:0000255" key="1">
    <source>
        <dbReference type="HAMAP-Rule" id="MF_01184"/>
    </source>
</evidence>
<evidence type="ECO:0000305" key="2"/>
<feature type="chain" id="PRO_0000339674" description="Xanthine phosphoribosyltransferase">
    <location>
        <begin position="1"/>
        <end position="193"/>
    </location>
</feature>
<feature type="binding site" evidence="1">
    <location>
        <position position="20"/>
    </location>
    <ligand>
        <name>xanthine</name>
        <dbReference type="ChEBI" id="CHEBI:17712"/>
    </ligand>
</feature>
<feature type="binding site" evidence="1">
    <location>
        <position position="27"/>
    </location>
    <ligand>
        <name>xanthine</name>
        <dbReference type="ChEBI" id="CHEBI:17712"/>
    </ligand>
</feature>
<feature type="binding site" evidence="1">
    <location>
        <begin position="129"/>
        <end position="133"/>
    </location>
    <ligand>
        <name>5-phospho-alpha-D-ribose 1-diphosphate</name>
        <dbReference type="ChEBI" id="CHEBI:58017"/>
    </ligand>
</feature>
<feature type="binding site" evidence="1">
    <location>
        <position position="157"/>
    </location>
    <ligand>
        <name>xanthine</name>
        <dbReference type="ChEBI" id="CHEBI:17712"/>
    </ligand>
</feature>
<gene>
    <name evidence="1" type="primary">xpt</name>
    <name type="ordered locus">BAD_0692</name>
</gene>
<protein>
    <recommendedName>
        <fullName evidence="1">Xanthine phosphoribosyltransferase</fullName>
        <shortName evidence="1">XPRTase</shortName>
        <ecNumber evidence="1">2.4.2.22</ecNumber>
    </recommendedName>
</protein>
<name>XPT_BIFAA</name>
<sequence>MKELEERIVQQGTVKPGNVLKVDAFLNHQCDVELFDHMGAAWAEHFKGKTIDKILTIEASGIGIACVVARHFGNVPVVFAKKAQSINLDGDQYTTTVYSFTKQKEFPVIVSKRYLNEGDHVLLIDDFLANGKALKGLIELCHEAGATVEGIGIAVEKGFQGGGDQLREEGYDVDSLAIVESMDPENGTIEFRS</sequence>
<accession>A1A190</accession>
<comment type="function">
    <text evidence="1">Converts the preformed base xanthine, a product of nucleic acid breakdown, to xanthosine 5'-monophosphate (XMP), so it can be reused for RNA or DNA synthesis.</text>
</comment>
<comment type="catalytic activity">
    <reaction evidence="1">
        <text>XMP + diphosphate = xanthine + 5-phospho-alpha-D-ribose 1-diphosphate</text>
        <dbReference type="Rhea" id="RHEA:10800"/>
        <dbReference type="ChEBI" id="CHEBI:17712"/>
        <dbReference type="ChEBI" id="CHEBI:33019"/>
        <dbReference type="ChEBI" id="CHEBI:57464"/>
        <dbReference type="ChEBI" id="CHEBI:58017"/>
        <dbReference type="EC" id="2.4.2.22"/>
    </reaction>
</comment>
<comment type="pathway">
    <text evidence="1">Purine metabolism; XMP biosynthesis via salvage pathway; XMP from xanthine: step 1/1.</text>
</comment>
<comment type="subunit">
    <text evidence="1">Homodimer.</text>
</comment>
<comment type="subcellular location">
    <subcellularLocation>
        <location evidence="1">Cytoplasm</location>
    </subcellularLocation>
</comment>
<comment type="similarity">
    <text evidence="1">Belongs to the purine/pyrimidine phosphoribosyltransferase family. Xpt subfamily.</text>
</comment>
<comment type="sequence caution" evidence="2">
    <conflict type="erroneous initiation">
        <sequence resource="EMBL-CDS" id="BAF39473"/>
    </conflict>
</comment>
<dbReference type="EC" id="2.4.2.22" evidence="1"/>
<dbReference type="EMBL" id="AP009256">
    <property type="protein sequence ID" value="BAF39473.1"/>
    <property type="status" value="ALT_INIT"/>
    <property type="molecule type" value="Genomic_DNA"/>
</dbReference>
<dbReference type="RefSeq" id="WP_041777287.1">
    <property type="nucleotide sequence ID" value="NC_008618.1"/>
</dbReference>
<dbReference type="SMR" id="A1A190"/>
<dbReference type="STRING" id="367928.BAD_0692"/>
<dbReference type="PaxDb" id="1680-BADO_0737"/>
<dbReference type="GeneID" id="4556757"/>
<dbReference type="KEGG" id="bad:BAD_0692"/>
<dbReference type="HOGENOM" id="CLU_099015_0_0_11"/>
<dbReference type="UniPathway" id="UPA00602">
    <property type="reaction ID" value="UER00658"/>
</dbReference>
<dbReference type="Proteomes" id="UP000008702">
    <property type="component" value="Chromosome"/>
</dbReference>
<dbReference type="GO" id="GO:0005737">
    <property type="term" value="C:cytoplasm"/>
    <property type="evidence" value="ECO:0007669"/>
    <property type="project" value="UniProtKB-SubCell"/>
</dbReference>
<dbReference type="GO" id="GO:0000310">
    <property type="term" value="F:xanthine phosphoribosyltransferase activity"/>
    <property type="evidence" value="ECO:0007669"/>
    <property type="project" value="UniProtKB-UniRule"/>
</dbReference>
<dbReference type="GO" id="GO:0006166">
    <property type="term" value="P:purine ribonucleoside salvage"/>
    <property type="evidence" value="ECO:0007669"/>
    <property type="project" value="UniProtKB-KW"/>
</dbReference>
<dbReference type="GO" id="GO:0046110">
    <property type="term" value="P:xanthine metabolic process"/>
    <property type="evidence" value="ECO:0007669"/>
    <property type="project" value="InterPro"/>
</dbReference>
<dbReference type="GO" id="GO:0032265">
    <property type="term" value="P:XMP salvage"/>
    <property type="evidence" value="ECO:0007669"/>
    <property type="project" value="UniProtKB-UniRule"/>
</dbReference>
<dbReference type="CDD" id="cd06223">
    <property type="entry name" value="PRTases_typeI"/>
    <property type="match status" value="1"/>
</dbReference>
<dbReference type="Gene3D" id="3.40.50.2020">
    <property type="match status" value="1"/>
</dbReference>
<dbReference type="HAMAP" id="MF_01184">
    <property type="entry name" value="XPRTase"/>
    <property type="match status" value="1"/>
</dbReference>
<dbReference type="InterPro" id="IPR000836">
    <property type="entry name" value="PRibTrfase_dom"/>
</dbReference>
<dbReference type="InterPro" id="IPR029057">
    <property type="entry name" value="PRTase-like"/>
</dbReference>
<dbReference type="InterPro" id="IPR050118">
    <property type="entry name" value="Pur/Pyrimidine_PRTase"/>
</dbReference>
<dbReference type="InterPro" id="IPR010079">
    <property type="entry name" value="Xanthine_PRibTrfase"/>
</dbReference>
<dbReference type="NCBIfam" id="NF006671">
    <property type="entry name" value="PRK09219.1"/>
    <property type="match status" value="1"/>
</dbReference>
<dbReference type="NCBIfam" id="TIGR01744">
    <property type="entry name" value="XPRTase"/>
    <property type="match status" value="1"/>
</dbReference>
<dbReference type="PANTHER" id="PTHR43864">
    <property type="entry name" value="HYPOXANTHINE/GUANINE PHOSPHORIBOSYLTRANSFERASE"/>
    <property type="match status" value="1"/>
</dbReference>
<dbReference type="PANTHER" id="PTHR43864:SF1">
    <property type="entry name" value="XANTHINE PHOSPHORIBOSYLTRANSFERASE"/>
    <property type="match status" value="1"/>
</dbReference>
<dbReference type="Pfam" id="PF00156">
    <property type="entry name" value="Pribosyltran"/>
    <property type="match status" value="1"/>
</dbReference>
<dbReference type="SUPFAM" id="SSF53271">
    <property type="entry name" value="PRTase-like"/>
    <property type="match status" value="1"/>
</dbReference>